<organism>
    <name type="scientific">Dictyostelium discoideum</name>
    <name type="common">Social amoeba</name>
    <dbReference type="NCBI Taxonomy" id="44689"/>
    <lineage>
        <taxon>Eukaryota</taxon>
        <taxon>Amoebozoa</taxon>
        <taxon>Evosea</taxon>
        <taxon>Eumycetozoa</taxon>
        <taxon>Dictyostelia</taxon>
        <taxon>Dictyosteliales</taxon>
        <taxon>Dictyosteliaceae</taxon>
        <taxon>Dictyostelium</taxon>
    </lineage>
</organism>
<evidence type="ECO:0000250" key="1">
    <source>
        <dbReference type="UniProtKB" id="O43809"/>
    </source>
</evidence>
<evidence type="ECO:0000250" key="2">
    <source>
        <dbReference type="UniProtKB" id="Q9CQF3"/>
    </source>
</evidence>
<evidence type="ECO:0000255" key="3">
    <source>
        <dbReference type="PROSITE-ProRule" id="PRU00794"/>
    </source>
</evidence>
<evidence type="ECO:0000305" key="4"/>
<keyword id="KW-0963">Cytoplasm</keyword>
<keyword id="KW-0221">Differentiation</keyword>
<keyword id="KW-0507">mRNA processing</keyword>
<keyword id="KW-0539">Nucleus</keyword>
<keyword id="KW-1185">Reference proteome</keyword>
<keyword id="KW-0694">RNA-binding</keyword>
<accession>Q55E68</accession>
<feature type="chain" id="PRO_0000327445" description="Cleavage and polyadenylation specificity factor subunit 5">
    <location>
        <begin position="1"/>
        <end position="200"/>
    </location>
</feature>
<feature type="domain" description="Nudix hydrolase" evidence="3">
    <location>
        <begin position="45"/>
        <end position="170"/>
    </location>
</feature>
<feature type="region of interest" description="Interaction with RNA" evidence="1">
    <location>
        <begin position="70"/>
        <end position="72"/>
    </location>
</feature>
<feature type="short sequence motif" description="Nudix box">
    <location>
        <begin position="77"/>
        <end position="98"/>
    </location>
</feature>
<feature type="site" description="Interaction with RNA" evidence="1">
    <location>
        <position position="24"/>
    </location>
</feature>
<dbReference type="EMBL" id="AAFI02000005">
    <property type="protein sequence ID" value="EAL72035.1"/>
    <property type="molecule type" value="Genomic_DNA"/>
</dbReference>
<dbReference type="RefSeq" id="XP_645913.1">
    <property type="nucleotide sequence ID" value="XM_640821.1"/>
</dbReference>
<dbReference type="SMR" id="Q55E68"/>
<dbReference type="FunCoup" id="Q55E68">
    <property type="interactions" value="1368"/>
</dbReference>
<dbReference type="STRING" id="44689.Q55E68"/>
<dbReference type="PaxDb" id="44689-DDB0233564"/>
<dbReference type="EnsemblProtists" id="EAL72035">
    <property type="protein sequence ID" value="EAL72035"/>
    <property type="gene ID" value="DDB_G0269370"/>
</dbReference>
<dbReference type="GeneID" id="8616854"/>
<dbReference type="KEGG" id="ddi:DDB_G0269370"/>
<dbReference type="dictyBase" id="DDB_G0269370"/>
<dbReference type="VEuPathDB" id="AmoebaDB:DDB_G0269370"/>
<dbReference type="eggNOG" id="KOG1689">
    <property type="taxonomic scope" value="Eukaryota"/>
</dbReference>
<dbReference type="HOGENOM" id="CLU_068704_1_1_1"/>
<dbReference type="InParanoid" id="Q55E68"/>
<dbReference type="OMA" id="NDEWEIG"/>
<dbReference type="PhylomeDB" id="Q55E68"/>
<dbReference type="PRO" id="PR:Q55E68"/>
<dbReference type="Proteomes" id="UP000002195">
    <property type="component" value="Chromosome 1"/>
</dbReference>
<dbReference type="GO" id="GO:0005737">
    <property type="term" value="C:cytoplasm"/>
    <property type="evidence" value="ECO:0007669"/>
    <property type="project" value="UniProtKB-SubCell"/>
</dbReference>
<dbReference type="GO" id="GO:0005849">
    <property type="term" value="C:mRNA cleavage factor complex"/>
    <property type="evidence" value="ECO:0000250"/>
    <property type="project" value="UniProtKB"/>
</dbReference>
<dbReference type="GO" id="GO:0005634">
    <property type="term" value="C:nucleus"/>
    <property type="evidence" value="ECO:0000250"/>
    <property type="project" value="dictyBase"/>
</dbReference>
<dbReference type="GO" id="GO:0035925">
    <property type="term" value="F:mRNA 3'-UTR AU-rich region binding"/>
    <property type="evidence" value="ECO:0000250"/>
    <property type="project" value="UniProtKB"/>
</dbReference>
<dbReference type="GO" id="GO:0003729">
    <property type="term" value="F:mRNA binding"/>
    <property type="evidence" value="ECO:0000250"/>
    <property type="project" value="UniProtKB"/>
</dbReference>
<dbReference type="GO" id="GO:0030154">
    <property type="term" value="P:cell differentiation"/>
    <property type="evidence" value="ECO:0007669"/>
    <property type="project" value="UniProtKB-KW"/>
</dbReference>
<dbReference type="GO" id="GO:0180010">
    <property type="term" value="P:co-transcriptional mRNA 3'-end processing, cleavage and polyadenylation pathway"/>
    <property type="evidence" value="ECO:0000250"/>
    <property type="project" value="UniProtKB"/>
</dbReference>
<dbReference type="GO" id="GO:0031124">
    <property type="term" value="P:mRNA 3'-end processing"/>
    <property type="evidence" value="ECO:0000250"/>
    <property type="project" value="UniProtKB"/>
</dbReference>
<dbReference type="GO" id="GO:0110104">
    <property type="term" value="P:mRNA alternative polyadenylation"/>
    <property type="evidence" value="ECO:0000250"/>
    <property type="project" value="UniProtKB"/>
</dbReference>
<dbReference type="GO" id="GO:0006397">
    <property type="term" value="P:mRNA processing"/>
    <property type="evidence" value="ECO:0000250"/>
    <property type="project" value="dictyBase"/>
</dbReference>
<dbReference type="GO" id="GO:0051290">
    <property type="term" value="P:protein heterotetramerization"/>
    <property type="evidence" value="ECO:0000250"/>
    <property type="project" value="UniProtKB"/>
</dbReference>
<dbReference type="CDD" id="cd18871">
    <property type="entry name" value="NUDIX_Cfim25_Nudt21"/>
    <property type="match status" value="1"/>
</dbReference>
<dbReference type="FunFam" id="3.90.79.10:FF:000020">
    <property type="entry name" value="Pre-mRNA cleavage factor Im subunit 2"/>
    <property type="match status" value="1"/>
</dbReference>
<dbReference type="Gene3D" id="3.90.79.10">
    <property type="entry name" value="Nucleoside Triphosphate Pyrophosphohydrolase"/>
    <property type="match status" value="1"/>
</dbReference>
<dbReference type="InterPro" id="IPR016706">
    <property type="entry name" value="Cleav_polyA_spec_factor_su5"/>
</dbReference>
<dbReference type="InterPro" id="IPR015797">
    <property type="entry name" value="NUDIX_hydrolase-like_dom_sf"/>
</dbReference>
<dbReference type="InterPro" id="IPR000086">
    <property type="entry name" value="NUDIX_hydrolase_dom"/>
</dbReference>
<dbReference type="PANTHER" id="PTHR13047">
    <property type="entry name" value="PRE-MRNA CLEAVAGE FACTOR IM, 25KD SUBUNIT"/>
    <property type="match status" value="1"/>
</dbReference>
<dbReference type="Pfam" id="PF13869">
    <property type="entry name" value="NUDIX_2"/>
    <property type="match status" value="1"/>
</dbReference>
<dbReference type="PIRSF" id="PIRSF017888">
    <property type="entry name" value="CPSF-25"/>
    <property type="match status" value="1"/>
</dbReference>
<dbReference type="SUPFAM" id="SSF55811">
    <property type="entry name" value="Nudix"/>
    <property type="match status" value="1"/>
</dbReference>
<dbReference type="PROSITE" id="PS51462">
    <property type="entry name" value="NUDIX"/>
    <property type="match status" value="1"/>
</dbReference>
<name>CPSF5_DICDI</name>
<proteinExistence type="inferred from homology"/>
<comment type="function">
    <text evidence="1 2">Component of the cleavage factor Im (CFIm) complex that functions as an activator of the pre-mRNA 3'-end cleavage and polyadenylation processing required for the maturation of pre-mRNA into functional mRNAs. CFIm contributes to the recruitment of multiprotein complexes on specific sequences on the pre-mRNA 3'-end, so called cleavage and polyadenylation signals (pA signals). Most pre-mRNAs contain multiple pA signals, resulting in alternative cleavage and polyadenylation (APA) producing mRNAs with variable 3'-end formation. The CFIm complex acts as a key regulator of cleavage and polyadenylation site choice during APA through its binding to 5'-UGUA-3' elements localized in the 3'-untranslated region (UTR) for a huge number of pre-mRNAs. Binds to 5'-UGUA-3' elements localized upstream of pA signals that act as enhancers of pre-mRNA 3'-end processing. The homodimer mediates simultaneous sequence-specific recognition of two 5'-UGUA-3' elements within the pre-mRNA. Plays a role in somatic cell fate transitions and pluripotency by regulating widespread changes in gene expression through an APA-dependent function. Binds to chromatin.</text>
</comment>
<comment type="subunit">
    <text evidence="1">Homodimer (via N- and C-terminus); binds RNA as homodimer. Component of the cleavage factor Im (CFIm) complex.</text>
</comment>
<comment type="subcellular location">
    <subcellularLocation>
        <location evidence="1">Nucleus</location>
    </subcellularLocation>
    <subcellularLocation>
        <location evidence="1">Cytoplasm</location>
    </subcellularLocation>
</comment>
<comment type="similarity">
    <text evidence="4">Belongs to the Nudix hydrolase family. CPSF5 subfamily.</text>
</comment>
<comment type="caution">
    <text evidence="4">Lacks the conserved metal-binding residues in the NUDIX motif and is not expected to have hydrolase activity.</text>
</comment>
<gene>
    <name evidence="1" type="primary">nudt21</name>
    <name evidence="1" type="synonym">cpsf5</name>
    <name type="ORF">DDB_G0269370</name>
</gene>
<sequence>MSIKTLTLYNFNTSYSFGKEEKKEKEQSLTSKLARLKDSYEKEGLRKAVEGIIIIHDHGHPHILLLQDNNYFKLPGGKLKPGENEIDGLIRKLTKKLSPTGTPVSDAPWEIGDHVSTWWRPNFEPSLFPYIPSHITKPKECKKLFVVTLPEKCKFAVSNNLSLIAVSLYEIYNNSQRYGAVISSIPALISRYTFVYLNVD</sequence>
<protein>
    <recommendedName>
        <fullName evidence="1">Cleavage and polyadenylation specificity factor subunit 5</fullName>
    </recommendedName>
</protein>
<reference key="1">
    <citation type="journal article" date="2005" name="Nature">
        <title>The genome of the social amoeba Dictyostelium discoideum.</title>
        <authorList>
            <person name="Eichinger L."/>
            <person name="Pachebat J.A."/>
            <person name="Gloeckner G."/>
            <person name="Rajandream M.A."/>
            <person name="Sucgang R."/>
            <person name="Berriman M."/>
            <person name="Song J."/>
            <person name="Olsen R."/>
            <person name="Szafranski K."/>
            <person name="Xu Q."/>
            <person name="Tunggal B."/>
            <person name="Kummerfeld S."/>
            <person name="Madera M."/>
            <person name="Konfortov B.A."/>
            <person name="Rivero F."/>
            <person name="Bankier A.T."/>
            <person name="Lehmann R."/>
            <person name="Hamlin N."/>
            <person name="Davies R."/>
            <person name="Gaudet P."/>
            <person name="Fey P."/>
            <person name="Pilcher K."/>
            <person name="Chen G."/>
            <person name="Saunders D."/>
            <person name="Sodergren E.J."/>
            <person name="Davis P."/>
            <person name="Kerhornou A."/>
            <person name="Nie X."/>
            <person name="Hall N."/>
            <person name="Anjard C."/>
            <person name="Hemphill L."/>
            <person name="Bason N."/>
            <person name="Farbrother P."/>
            <person name="Desany B."/>
            <person name="Just E."/>
            <person name="Morio T."/>
            <person name="Rost R."/>
            <person name="Churcher C.M."/>
            <person name="Cooper J."/>
            <person name="Haydock S."/>
            <person name="van Driessche N."/>
            <person name="Cronin A."/>
            <person name="Goodhead I."/>
            <person name="Muzny D.M."/>
            <person name="Mourier T."/>
            <person name="Pain A."/>
            <person name="Lu M."/>
            <person name="Harper D."/>
            <person name="Lindsay R."/>
            <person name="Hauser H."/>
            <person name="James K.D."/>
            <person name="Quiles M."/>
            <person name="Madan Babu M."/>
            <person name="Saito T."/>
            <person name="Buchrieser C."/>
            <person name="Wardroper A."/>
            <person name="Felder M."/>
            <person name="Thangavelu M."/>
            <person name="Johnson D."/>
            <person name="Knights A."/>
            <person name="Loulseged H."/>
            <person name="Mungall K.L."/>
            <person name="Oliver K."/>
            <person name="Price C."/>
            <person name="Quail M.A."/>
            <person name="Urushihara H."/>
            <person name="Hernandez J."/>
            <person name="Rabbinowitsch E."/>
            <person name="Steffen D."/>
            <person name="Sanders M."/>
            <person name="Ma J."/>
            <person name="Kohara Y."/>
            <person name="Sharp S."/>
            <person name="Simmonds M.N."/>
            <person name="Spiegler S."/>
            <person name="Tivey A."/>
            <person name="Sugano S."/>
            <person name="White B."/>
            <person name="Walker D."/>
            <person name="Woodward J.R."/>
            <person name="Winckler T."/>
            <person name="Tanaka Y."/>
            <person name="Shaulsky G."/>
            <person name="Schleicher M."/>
            <person name="Weinstock G.M."/>
            <person name="Rosenthal A."/>
            <person name="Cox E.C."/>
            <person name="Chisholm R.L."/>
            <person name="Gibbs R.A."/>
            <person name="Loomis W.F."/>
            <person name="Platzer M."/>
            <person name="Kay R.R."/>
            <person name="Williams J.G."/>
            <person name="Dear P.H."/>
            <person name="Noegel A.A."/>
            <person name="Barrell B.G."/>
            <person name="Kuspa A."/>
        </authorList>
    </citation>
    <scope>NUCLEOTIDE SEQUENCE [LARGE SCALE GENOMIC DNA]</scope>
    <source>
        <strain>AX4</strain>
    </source>
</reference>